<proteinExistence type="evidence at transcript level"/>
<gene>
    <name type="primary">PDHA</name>
</gene>
<feature type="transit peptide" description="Mitochondrion" evidence="1">
    <location>
        <begin position="1" status="less than"/>
        <end position="2"/>
    </location>
</feature>
<feature type="chain" id="PRO_0000020446" description="Pyruvate dehydrogenase E1 component subunit alpha, mitochondrial">
    <location>
        <begin position="3"/>
        <end position="363"/>
    </location>
</feature>
<feature type="binding site" evidence="2">
    <location>
        <position position="65"/>
    </location>
    <ligand>
        <name>pyruvate</name>
        <dbReference type="ChEBI" id="CHEBI:15361"/>
    </ligand>
</feature>
<feature type="binding site" evidence="2">
    <location>
        <position position="91"/>
    </location>
    <ligand>
        <name>pyruvate</name>
        <dbReference type="ChEBI" id="CHEBI:15361"/>
    </ligand>
</feature>
<feature type="binding site" evidence="2">
    <location>
        <position position="91"/>
    </location>
    <ligand>
        <name>thiamine diphosphate</name>
        <dbReference type="ChEBI" id="CHEBI:58937"/>
        <note>ligand shared with beta subunit</note>
    </ligand>
</feature>
<feature type="binding site" evidence="2">
    <location>
        <position position="92"/>
    </location>
    <ligand>
        <name>pyruvate</name>
        <dbReference type="ChEBI" id="CHEBI:15361"/>
    </ligand>
</feature>
<feature type="binding site" evidence="2">
    <location>
        <position position="92"/>
    </location>
    <ligand>
        <name>thiamine diphosphate</name>
        <dbReference type="ChEBI" id="CHEBI:58937"/>
        <note>ligand shared with beta subunit</note>
    </ligand>
</feature>
<feature type="binding site" evidence="2">
    <location>
        <position position="130"/>
    </location>
    <ligand>
        <name>pyruvate</name>
        <dbReference type="ChEBI" id="CHEBI:15361"/>
    </ligand>
</feature>
<feature type="binding site" evidence="2">
    <location>
        <position position="138"/>
    </location>
    <ligand>
        <name>pyruvate</name>
        <dbReference type="ChEBI" id="CHEBI:15361"/>
    </ligand>
</feature>
<feature type="binding site" evidence="2">
    <location>
        <position position="138"/>
    </location>
    <ligand>
        <name>thiamine diphosphate</name>
        <dbReference type="ChEBI" id="CHEBI:58937"/>
        <note>ligand shared with beta subunit</note>
    </ligand>
</feature>
<feature type="binding site" evidence="2">
    <location>
        <position position="140"/>
    </location>
    <ligand>
        <name>pyruvate</name>
        <dbReference type="ChEBI" id="CHEBI:15361"/>
    </ligand>
</feature>
<feature type="binding site" evidence="2">
    <location>
        <position position="140"/>
    </location>
    <ligand>
        <name>thiamine diphosphate</name>
        <dbReference type="ChEBI" id="CHEBI:58937"/>
        <note>ligand shared with beta subunit</note>
    </ligand>
</feature>
<feature type="binding site" evidence="2">
    <location>
        <position position="169"/>
    </location>
    <ligand>
        <name>Mg(2+)</name>
        <dbReference type="ChEBI" id="CHEBI:18420"/>
    </ligand>
</feature>
<feature type="binding site" evidence="2">
    <location>
        <position position="169"/>
    </location>
    <ligand>
        <name>pyruvate</name>
        <dbReference type="ChEBI" id="CHEBI:15361"/>
    </ligand>
</feature>
<feature type="binding site" evidence="2">
    <location>
        <position position="169"/>
    </location>
    <ligand>
        <name>thiamine diphosphate</name>
        <dbReference type="ChEBI" id="CHEBI:58937"/>
        <note>ligand shared with beta subunit</note>
    </ligand>
</feature>
<feature type="binding site" evidence="2">
    <location>
        <position position="170"/>
    </location>
    <ligand>
        <name>pyruvate</name>
        <dbReference type="ChEBI" id="CHEBI:15361"/>
    </ligand>
</feature>
<feature type="binding site" evidence="2">
    <location>
        <position position="170"/>
    </location>
    <ligand>
        <name>thiamine diphosphate</name>
        <dbReference type="ChEBI" id="CHEBI:58937"/>
        <note>ligand shared with beta subunit</note>
    </ligand>
</feature>
<feature type="binding site" evidence="2">
    <location>
        <position position="171"/>
    </location>
    <ligand>
        <name>pyruvate</name>
        <dbReference type="ChEBI" id="CHEBI:15361"/>
    </ligand>
</feature>
<feature type="binding site" evidence="2">
    <location>
        <position position="171"/>
    </location>
    <ligand>
        <name>thiamine diphosphate</name>
        <dbReference type="ChEBI" id="CHEBI:58937"/>
        <note>ligand shared with beta subunit</note>
    </ligand>
</feature>
<feature type="binding site" evidence="2">
    <location>
        <position position="198"/>
    </location>
    <ligand>
        <name>Mg(2+)</name>
        <dbReference type="ChEBI" id="CHEBI:18420"/>
    </ligand>
</feature>
<feature type="binding site" evidence="2">
    <location>
        <position position="198"/>
    </location>
    <ligand>
        <name>pyruvate</name>
        <dbReference type="ChEBI" id="CHEBI:15361"/>
    </ligand>
</feature>
<feature type="binding site" evidence="2">
    <location>
        <position position="198"/>
    </location>
    <ligand>
        <name>thiamine diphosphate</name>
        <dbReference type="ChEBI" id="CHEBI:58937"/>
        <note>ligand shared with beta subunit</note>
    </ligand>
</feature>
<feature type="binding site" evidence="2">
    <location>
        <position position="200"/>
    </location>
    <ligand>
        <name>Mg(2+)</name>
        <dbReference type="ChEBI" id="CHEBI:18420"/>
    </ligand>
</feature>
<feature type="binding site" evidence="2">
    <location>
        <position position="200"/>
    </location>
    <ligand>
        <name>pyruvate</name>
        <dbReference type="ChEBI" id="CHEBI:15361"/>
    </ligand>
</feature>
<feature type="binding site" evidence="2">
    <location>
        <position position="265"/>
    </location>
    <ligand>
        <name>thiamine diphosphate</name>
        <dbReference type="ChEBI" id="CHEBI:58937"/>
        <note>ligand shared with beta subunit</note>
    </ligand>
</feature>
<feature type="modified residue" description="N6-acetyllysine; alternate" evidence="3">
    <location>
        <position position="36"/>
    </location>
</feature>
<feature type="modified residue" description="N6-succinyllysine; alternate" evidence="3">
    <location>
        <position position="36"/>
    </location>
</feature>
<feature type="modified residue" description="Phosphoserine; by PDK1" evidence="2">
    <location>
        <position position="205"/>
    </location>
</feature>
<feature type="modified residue" description="N6-acetyllysine; alternate" evidence="3">
    <location>
        <position position="217"/>
    </location>
</feature>
<feature type="modified residue" description="N6-succinyllysine; alternate" evidence="3">
    <location>
        <position position="217"/>
    </location>
</feature>
<feature type="modified residue" description="N6-acetyllysine" evidence="3">
    <location>
        <position position="240"/>
    </location>
</feature>
<feature type="modified residue" description="N6-succinyllysine" evidence="3">
    <location>
        <position position="250"/>
    </location>
</feature>
<feature type="modified residue" description="Phosphoserine; by PDK1, PDK2, PDK3 and PDK4" evidence="2">
    <location>
        <position position="266"/>
    </location>
</feature>
<feature type="modified residue" description="Phosphoserine" evidence="3">
    <location>
        <position position="268"/>
    </location>
</feature>
<feature type="modified residue" description="Phosphoserine; by PDK1, PDK2, PDK3 and PDK4" evidence="2">
    <location>
        <position position="273"/>
    </location>
</feature>
<feature type="modified residue" description="Phosphotyrosine" evidence="3">
    <location>
        <position position="274"/>
    </location>
</feature>
<feature type="modified residue" description="N6-acetyllysine; alternate" evidence="3">
    <location>
        <position position="286"/>
    </location>
</feature>
<feature type="modified residue" description="N6-succinyllysine; alternate" evidence="3">
    <location>
        <position position="286"/>
    </location>
</feature>
<feature type="modified residue" description="N6-acetyllysine" evidence="2">
    <location>
        <position position="294"/>
    </location>
</feature>
<feature type="modified residue" description="N6-acetyllysine" evidence="3">
    <location>
        <position position="309"/>
    </location>
</feature>
<feature type="modified residue" description="N6-succinyllysine" evidence="3">
    <location>
        <position position="358"/>
    </location>
</feature>
<feature type="non-terminal residue">
    <location>
        <position position="1"/>
    </location>
</feature>
<organism>
    <name type="scientific">Sminthopsis macroura</name>
    <name type="common">Stripe-faced dunnart</name>
    <dbReference type="NCBI Taxonomy" id="9302"/>
    <lineage>
        <taxon>Eukaryota</taxon>
        <taxon>Metazoa</taxon>
        <taxon>Chordata</taxon>
        <taxon>Craniata</taxon>
        <taxon>Vertebrata</taxon>
        <taxon>Euteleostomi</taxon>
        <taxon>Mammalia</taxon>
        <taxon>Metatheria</taxon>
        <taxon>Dasyuromorphia</taxon>
        <taxon>Dasyuridae</taxon>
        <taxon>Sminthopsis</taxon>
    </lineage>
</organism>
<name>ODPA_SMIMA</name>
<sequence length="363" mass="40735">RNFANDATFDIKKCDVHRLEEGPPTTAVLTREEGLKYYKIMQTVRRMELKADQLYKQKIIRGFCHLYDGQEACCMGLEAGINPTDHVITAYRAHGFTYTRGLPVREILAELTGRRGGCAKGKGGSMHMYAKNFYGGNGIVGAQVPLGVGIALACKYNEKDEICLTLYGDGAANQGQIFEAYNMAALWKLPCIFICENNRYGMGTSVERAAASTDYYKRGDFIPGIMVDGMDVLCVREATKFAAAYCRSGKGPMLMELQTYRYHGHSMSDPGVSYRTREEIQEVRSKSDPIMLLKDRMVNNNLASIEELKEIDVEVRKEIEDAAQFATADPEPPLEELGYHIYSRDPPFEVRGANQWIKYKSVS</sequence>
<evidence type="ECO:0000250" key="1"/>
<evidence type="ECO:0000250" key="2">
    <source>
        <dbReference type="UniProtKB" id="P08559"/>
    </source>
</evidence>
<evidence type="ECO:0000250" key="3">
    <source>
        <dbReference type="UniProtKB" id="P35486"/>
    </source>
</evidence>
<accession>P52900</accession>
<comment type="function">
    <text evidence="1">The pyruvate dehydrogenase complex catalyzes the overall conversion of pyruvate to acetyl-CoA and CO(2), and thereby links the glycolytic pathway to the tricarboxylic cycle.</text>
</comment>
<comment type="catalytic activity">
    <reaction>
        <text>N(6)-[(R)-lipoyl]-L-lysyl-[protein] + pyruvate + H(+) = N(6)-[(R)-S(8)-acetyldihydrolipoyl]-L-lysyl-[protein] + CO2</text>
        <dbReference type="Rhea" id="RHEA:19189"/>
        <dbReference type="Rhea" id="RHEA-COMP:10474"/>
        <dbReference type="Rhea" id="RHEA-COMP:10478"/>
        <dbReference type="ChEBI" id="CHEBI:15361"/>
        <dbReference type="ChEBI" id="CHEBI:15378"/>
        <dbReference type="ChEBI" id="CHEBI:16526"/>
        <dbReference type="ChEBI" id="CHEBI:83099"/>
        <dbReference type="ChEBI" id="CHEBI:83111"/>
        <dbReference type="EC" id="1.2.4.1"/>
    </reaction>
</comment>
<comment type="cofactor">
    <cofactor evidence="2">
        <name>thiamine diphosphate</name>
        <dbReference type="ChEBI" id="CHEBI:58937"/>
    </cofactor>
    <cofactor evidence="2">
        <name>Mg(2+)</name>
        <dbReference type="ChEBI" id="CHEBI:18420"/>
    </cofactor>
</comment>
<comment type="activity regulation">
    <text evidence="1">Pyruvate dehydrogenase activity is inhibited by phosphorylation of PDHA1; it is reactivated by dephosphorylation.</text>
</comment>
<comment type="subunit">
    <text evidence="1">Heterotetramer of two PDHA1 and two PDHB subunits. The heterotetramer interacts with DLAT, and is part of the multimeric pyruvate dehydrogenase complex that contains multiple copies of pyruvate dehydrogenase (E1), dihydrolipoamide acetyltransferase (DLAT, E2) and lipoamide dehydrogenase (DLD, E3). These subunits are bound to an inner core composed of about 48 DLAT and 12 PDHX molecules (By similarity).</text>
</comment>
<comment type="subcellular location">
    <subcellularLocation>
        <location evidence="1">Mitochondrion matrix</location>
    </subcellularLocation>
</comment>
<comment type="PTM">
    <text evidence="1">Phosphorylation at Ser-205, Ser-266 and Ser-273 by PDK family kinases inactivates the enzyme; for this phosphorylation at a single site is sufficient. Phosphorylation at Ser-266 interferes with access to active site, and thereby inactivates the enzyme. Dephosphorylation at all three sites, i.e. at Ser-205, Ser-266 and Ser-273, is required for reactivation (By similarity).</text>
</comment>
<comment type="PTM">
    <text evidence="1">Acetylation alters the phosphorylation pattern. Deacetylated by SIRT3 (By similarity).</text>
</comment>
<protein>
    <recommendedName>
        <fullName>Pyruvate dehydrogenase E1 component subunit alpha, mitochondrial</fullName>
        <shortName>PDHE1-A</shortName>
        <ecNumber>1.2.4.1</ecNumber>
    </recommendedName>
</protein>
<reference key="1">
    <citation type="journal article" date="1993" name="Genomics">
        <title>A eutherian X-linked gene, PDHA1, is autosomal in marsupials: a model for the evolution of a second, testis-specific variant in eutherian mammals.</title>
        <authorList>
            <person name="Fitzgerald J."/>
            <person name="Wilcox S.A."/>
            <person name="Graves J.A."/>
            <person name="Dahl H.-H.M."/>
        </authorList>
    </citation>
    <scope>NUCLEOTIDE SEQUENCE [MRNA]</scope>
    <source>
        <tissue>Testis</tissue>
    </source>
</reference>
<dbReference type="EC" id="1.2.4.1"/>
<dbReference type="EMBL" id="L20774">
    <property type="protein sequence ID" value="AAA31589.1"/>
    <property type="molecule type" value="mRNA"/>
</dbReference>
<dbReference type="SMR" id="P52900"/>
<dbReference type="GO" id="GO:0005759">
    <property type="term" value="C:mitochondrial matrix"/>
    <property type="evidence" value="ECO:0007669"/>
    <property type="project" value="UniProtKB-SubCell"/>
</dbReference>
<dbReference type="GO" id="GO:0045254">
    <property type="term" value="C:pyruvate dehydrogenase complex"/>
    <property type="evidence" value="ECO:0000250"/>
    <property type="project" value="UniProtKB"/>
</dbReference>
<dbReference type="GO" id="GO:0046872">
    <property type="term" value="F:metal ion binding"/>
    <property type="evidence" value="ECO:0007669"/>
    <property type="project" value="UniProtKB-KW"/>
</dbReference>
<dbReference type="GO" id="GO:0004739">
    <property type="term" value="F:pyruvate dehydrogenase (acetyl-transferring) activity"/>
    <property type="evidence" value="ECO:0007669"/>
    <property type="project" value="UniProtKB-EC"/>
</dbReference>
<dbReference type="GO" id="GO:0006006">
    <property type="term" value="P:glucose metabolic process"/>
    <property type="evidence" value="ECO:0007669"/>
    <property type="project" value="UniProtKB-KW"/>
</dbReference>
<dbReference type="GO" id="GO:0006086">
    <property type="term" value="P:pyruvate decarboxylation to acetyl-CoA"/>
    <property type="evidence" value="ECO:0000250"/>
    <property type="project" value="UniProtKB"/>
</dbReference>
<dbReference type="GO" id="GO:0006099">
    <property type="term" value="P:tricarboxylic acid cycle"/>
    <property type="evidence" value="ECO:0007669"/>
    <property type="project" value="UniProtKB-KW"/>
</dbReference>
<dbReference type="CDD" id="cd02000">
    <property type="entry name" value="TPP_E1_PDC_ADC_BCADC"/>
    <property type="match status" value="1"/>
</dbReference>
<dbReference type="FunFam" id="3.40.50.970:FF:000020">
    <property type="entry name" value="Pyruvate dehydrogenase E1 component subunit alpha, mitochondrial"/>
    <property type="match status" value="1"/>
</dbReference>
<dbReference type="Gene3D" id="3.40.50.970">
    <property type="match status" value="1"/>
</dbReference>
<dbReference type="InterPro" id="IPR001017">
    <property type="entry name" value="DH_E1"/>
</dbReference>
<dbReference type="InterPro" id="IPR050642">
    <property type="entry name" value="PDH_E1_Alpha_Subunit"/>
</dbReference>
<dbReference type="InterPro" id="IPR017597">
    <property type="entry name" value="Pyrv_DH_E1_asu_subgrp-y"/>
</dbReference>
<dbReference type="InterPro" id="IPR029061">
    <property type="entry name" value="THDP-binding"/>
</dbReference>
<dbReference type="NCBIfam" id="TIGR03182">
    <property type="entry name" value="PDH_E1_alph_y"/>
    <property type="match status" value="1"/>
</dbReference>
<dbReference type="PANTHER" id="PTHR11516:SF60">
    <property type="entry name" value="PYRUVATE DEHYDROGENASE E1 COMPONENT SUBUNIT ALPHA"/>
    <property type="match status" value="1"/>
</dbReference>
<dbReference type="PANTHER" id="PTHR11516">
    <property type="entry name" value="PYRUVATE DEHYDROGENASE E1 COMPONENT, ALPHA SUBUNIT BACTERIAL AND ORGANELLAR"/>
    <property type="match status" value="1"/>
</dbReference>
<dbReference type="Pfam" id="PF00676">
    <property type="entry name" value="E1_dh"/>
    <property type="match status" value="1"/>
</dbReference>
<dbReference type="SUPFAM" id="SSF52518">
    <property type="entry name" value="Thiamin diphosphate-binding fold (THDP-binding)"/>
    <property type="match status" value="1"/>
</dbReference>
<keyword id="KW-0007">Acetylation</keyword>
<keyword id="KW-0119">Carbohydrate metabolism</keyword>
<keyword id="KW-0313">Glucose metabolism</keyword>
<keyword id="KW-0460">Magnesium</keyword>
<keyword id="KW-0479">Metal-binding</keyword>
<keyword id="KW-0496">Mitochondrion</keyword>
<keyword id="KW-0560">Oxidoreductase</keyword>
<keyword id="KW-0597">Phosphoprotein</keyword>
<keyword id="KW-0670">Pyruvate</keyword>
<keyword id="KW-0786">Thiamine pyrophosphate</keyword>
<keyword id="KW-0809">Transit peptide</keyword>
<keyword id="KW-0816">Tricarboxylic acid cycle</keyword>